<accession>Q84N37</accession>
<evidence type="ECO:0000250" key="1"/>
<evidence type="ECO:0000255" key="2"/>
<evidence type="ECO:0000256" key="3">
    <source>
        <dbReference type="SAM" id="MobiDB-lite"/>
    </source>
</evidence>
<evidence type="ECO:0000269" key="4">
    <source>
    </source>
</evidence>
<evidence type="ECO:0000305" key="5"/>
<organism>
    <name type="scientific">Pisum sativum</name>
    <name type="common">Garden pea</name>
    <name type="synonym">Lathyrus oleraceus</name>
    <dbReference type="NCBI Taxonomy" id="3888"/>
    <lineage>
        <taxon>Eukaryota</taxon>
        <taxon>Viridiplantae</taxon>
        <taxon>Streptophyta</taxon>
        <taxon>Embryophyta</taxon>
        <taxon>Tracheophyta</taxon>
        <taxon>Spermatophyta</taxon>
        <taxon>Magnoliopsida</taxon>
        <taxon>eudicotyledons</taxon>
        <taxon>Gunneridae</taxon>
        <taxon>Pentapetalae</taxon>
        <taxon>rosids</taxon>
        <taxon>fabids</taxon>
        <taxon>Fabales</taxon>
        <taxon>Fabaceae</taxon>
        <taxon>Papilionoideae</taxon>
        <taxon>50 kb inversion clade</taxon>
        <taxon>NPAAA clade</taxon>
        <taxon>Hologalegina</taxon>
        <taxon>IRL clade</taxon>
        <taxon>Fabeae</taxon>
        <taxon>Pisum</taxon>
    </lineage>
</organism>
<reference key="1">
    <citation type="journal article" date="2004" name="J. Virol.">
        <title>A cysteine-rich plant protein potentiates Potyvirus movement through an interaction with the virus genome-linked protein VPg.</title>
        <authorList>
            <person name="Dunoyer P."/>
            <person name="Thomas C."/>
            <person name="Harrison S."/>
            <person name="Revers F."/>
            <person name="Maule A."/>
        </authorList>
    </citation>
    <scope>NUCLEOTIDE SEQUENCE [MRNA]</scope>
    <scope>INTERACTION WITH POTYVIRUS VPG PROTEIN</scope>
    <source>
        <strain>cv. Scout</strain>
        <tissue>Leaf</tissue>
    </source>
</reference>
<protein>
    <recommendedName>
        <fullName>OBERON-like protein</fullName>
    </recommendedName>
    <alternativeName>
        <fullName>Potyvirus VPg-interacting protein</fullName>
        <shortName>PVIPp</shortName>
    </alternativeName>
</protein>
<dbReference type="EMBL" id="AY271743">
    <property type="protein sequence ID" value="AAP22955.1"/>
    <property type="molecule type" value="mRNA"/>
</dbReference>
<dbReference type="GO" id="GO:0005634">
    <property type="term" value="C:nucleus"/>
    <property type="evidence" value="ECO:0007669"/>
    <property type="project" value="UniProtKB-SubCell"/>
</dbReference>
<dbReference type="GO" id="GO:0008270">
    <property type="term" value="F:zinc ion binding"/>
    <property type="evidence" value="ECO:0007669"/>
    <property type="project" value="UniProtKB-KW"/>
</dbReference>
<dbReference type="GO" id="GO:0010078">
    <property type="term" value="P:maintenance of root meristem identity"/>
    <property type="evidence" value="ECO:0007669"/>
    <property type="project" value="TreeGrafter"/>
</dbReference>
<dbReference type="GO" id="GO:0010492">
    <property type="term" value="P:maintenance of shoot apical meristem identity"/>
    <property type="evidence" value="ECO:0007669"/>
    <property type="project" value="TreeGrafter"/>
</dbReference>
<dbReference type="GO" id="GO:0010468">
    <property type="term" value="P:regulation of gene expression"/>
    <property type="evidence" value="ECO:0007669"/>
    <property type="project" value="TreeGrafter"/>
</dbReference>
<dbReference type="GO" id="GO:0010071">
    <property type="term" value="P:root meristem specification"/>
    <property type="evidence" value="ECO:0007669"/>
    <property type="project" value="TreeGrafter"/>
</dbReference>
<dbReference type="GO" id="GO:0046740">
    <property type="term" value="P:transport of virus in host, cell to cell"/>
    <property type="evidence" value="ECO:0000250"/>
    <property type="project" value="UniProtKB"/>
</dbReference>
<dbReference type="CDD" id="cd15612">
    <property type="entry name" value="PHD_OBE1_like"/>
    <property type="match status" value="1"/>
</dbReference>
<dbReference type="InterPro" id="IPR047578">
    <property type="entry name" value="OBE1-like_PHD"/>
</dbReference>
<dbReference type="InterPro" id="IPR004082">
    <property type="entry name" value="OBERON"/>
</dbReference>
<dbReference type="InterPro" id="IPR032881">
    <property type="entry name" value="Oberon-like_PHD"/>
</dbReference>
<dbReference type="InterPro" id="IPR032535">
    <property type="entry name" value="Oberon_cc"/>
</dbReference>
<dbReference type="PANTHER" id="PTHR21736:SF37">
    <property type="entry name" value="PROTEIN OBERON 2"/>
    <property type="match status" value="1"/>
</dbReference>
<dbReference type="PANTHER" id="PTHR21736">
    <property type="entry name" value="VERNALIZATION-INSENSITIVE PROTEIN 3"/>
    <property type="match status" value="1"/>
</dbReference>
<dbReference type="Pfam" id="PF16312">
    <property type="entry name" value="Oberon_cc"/>
    <property type="match status" value="1"/>
</dbReference>
<dbReference type="Pfam" id="PF07227">
    <property type="entry name" value="PHD_Oberon"/>
    <property type="match status" value="1"/>
</dbReference>
<dbReference type="PIRSF" id="PIRSF025218">
    <property type="entry name" value="DUF1423_pln"/>
    <property type="match status" value="1"/>
</dbReference>
<dbReference type="PRINTS" id="PR01544">
    <property type="entry name" value="ARATH130DUF"/>
</dbReference>
<dbReference type="PROSITE" id="PS01359">
    <property type="entry name" value="ZF_PHD_1"/>
    <property type="match status" value="1"/>
</dbReference>
<sequence>PTADAIAAKKMENGKAAIDFPDQSVIRRVSSADRISLQDIARERVDVICDRMHRLPDEFLDELKNGLRAILEGGNGSQHRDEFFILQKLVQSRSDLTAKTLIRAHRVQLEILVSINTGIQGFLHPSISLSQTSLIEIFLYKRCRNIACQNQLPADECSXDTCTNNNGFCNLCMCVICSKFDFEVNTCRWIGCDLXSHWTHTDCAIREQLICMGPSVKSGSGPSEMVFRCQACSXTSXLLGWVKDVFQHCAPSWDGDALIRELDFVSRIFHGSKDQRGMNLFWKCDDLKEKLKSRKMDSKAACRAILMVFQELDLDNSKSLENAESGRLIAPQEACNRIAEVVQEAIRKMEFVADEKMRMFKKARIAVEACDRELADKAREAGDLKVERQKKKSQIEELERIVRLKNAEADMFQLKANEAKREAERLQRIALAKSDKSEEEYTSNYLKQKLSEAEAEKQYLYEKIKLQESSRLSQSSGDPSSMLMYSKIHDLLYNGPPKADSQSNDCHPFRTNP</sequence>
<keyword id="KW-0175">Coiled coil</keyword>
<keyword id="KW-0217">Developmental protein</keyword>
<keyword id="KW-0945">Host-virus interaction</keyword>
<keyword id="KW-0479">Metal-binding</keyword>
<keyword id="KW-0539">Nucleus</keyword>
<keyword id="KW-0862">Zinc</keyword>
<keyword id="KW-0863">Zinc-finger</keyword>
<proteinExistence type="evidence at protein level"/>
<comment type="function">
    <text evidence="1 5">Required for the maintenance and/or establishment of both the shoot and root meristems, probably by controlling the expression of the meristem genes and of genes required for auxin responses. Involved in the development of the basal pole and in auxin-mediated root and vascular development in the embryo (By similarity). Confers sensitivity to turnip mosaic virus (TuMV) probably by promoting viral movement and multiplication via interaction with TuMV VPg (Probable).</text>
</comment>
<comment type="subunit">
    <text evidence="1 4">Self-interacts and probably forms heteromers (By similarity). Binds to VPg of pea seed borne mosaic virus (PSbMV), turnip mosaic virus (TuMV) and lettuce mosaic virus (LMV), but not with VPg of tobacco etch virus (TEV), cowpea mosaic virus (CPMV), tomato black ring virus (TBRV) and grapevine fan leaf virus (GFLV).</text>
</comment>
<comment type="subcellular location">
    <subcellularLocation>
        <location evidence="1">Nucleus</location>
    </subcellularLocation>
</comment>
<feature type="chain" id="PRO_0000399750" description="OBERON-like protein">
    <location>
        <begin position="1" status="less than"/>
        <end position="513"/>
    </location>
</feature>
<feature type="zinc finger region" description="PHD-type">
    <location>
        <begin position="166"/>
        <end position="235"/>
    </location>
</feature>
<feature type="region of interest" description="Disordered" evidence="3">
    <location>
        <begin position="493"/>
        <end position="513"/>
    </location>
</feature>
<feature type="coiled-coil region" evidence="2">
    <location>
        <begin position="372"/>
        <end position="469"/>
    </location>
</feature>
<feature type="compositionally biased region" description="Polar residues" evidence="3">
    <location>
        <begin position="500"/>
        <end position="513"/>
    </location>
</feature>
<feature type="non-terminal residue">
    <location>
        <position position="1"/>
    </location>
</feature>
<name>PVIP_PEA</name>
<gene>
    <name type="primary">PVIP</name>
</gene>